<gene>
    <name evidence="1" type="primary">cysS</name>
    <name type="ordered locus">Sde_1903</name>
</gene>
<organism>
    <name type="scientific">Saccharophagus degradans (strain 2-40 / ATCC 43961 / DSM 17024)</name>
    <dbReference type="NCBI Taxonomy" id="203122"/>
    <lineage>
        <taxon>Bacteria</taxon>
        <taxon>Pseudomonadati</taxon>
        <taxon>Pseudomonadota</taxon>
        <taxon>Gammaproteobacteria</taxon>
        <taxon>Cellvibrionales</taxon>
        <taxon>Cellvibrionaceae</taxon>
        <taxon>Saccharophagus</taxon>
    </lineage>
</organism>
<reference key="1">
    <citation type="journal article" date="2008" name="PLoS Genet.">
        <title>Complete genome sequence of the complex carbohydrate-degrading marine bacterium, Saccharophagus degradans strain 2-40 T.</title>
        <authorList>
            <person name="Weiner R.M."/>
            <person name="Taylor L.E. II"/>
            <person name="Henrissat B."/>
            <person name="Hauser L."/>
            <person name="Land M."/>
            <person name="Coutinho P.M."/>
            <person name="Rancurel C."/>
            <person name="Saunders E.H."/>
            <person name="Longmire A.G."/>
            <person name="Zhang H."/>
            <person name="Bayer E.A."/>
            <person name="Gilbert H.J."/>
            <person name="Larimer F."/>
            <person name="Zhulin I.B."/>
            <person name="Ekborg N.A."/>
            <person name="Lamed R."/>
            <person name="Richardson P.M."/>
            <person name="Borovok I."/>
            <person name="Hutcheson S."/>
        </authorList>
    </citation>
    <scope>NUCLEOTIDE SEQUENCE [LARGE SCALE GENOMIC DNA]</scope>
    <source>
        <strain>2-40 / ATCC 43961 / DSM 17024</strain>
    </source>
</reference>
<comment type="catalytic activity">
    <reaction evidence="1">
        <text>tRNA(Cys) + L-cysteine + ATP = L-cysteinyl-tRNA(Cys) + AMP + diphosphate</text>
        <dbReference type="Rhea" id="RHEA:17773"/>
        <dbReference type="Rhea" id="RHEA-COMP:9661"/>
        <dbReference type="Rhea" id="RHEA-COMP:9679"/>
        <dbReference type="ChEBI" id="CHEBI:30616"/>
        <dbReference type="ChEBI" id="CHEBI:33019"/>
        <dbReference type="ChEBI" id="CHEBI:35235"/>
        <dbReference type="ChEBI" id="CHEBI:78442"/>
        <dbReference type="ChEBI" id="CHEBI:78517"/>
        <dbReference type="ChEBI" id="CHEBI:456215"/>
        <dbReference type="EC" id="6.1.1.16"/>
    </reaction>
</comment>
<comment type="cofactor">
    <cofactor evidence="1">
        <name>Zn(2+)</name>
        <dbReference type="ChEBI" id="CHEBI:29105"/>
    </cofactor>
    <text evidence="1">Binds 1 zinc ion per subunit.</text>
</comment>
<comment type="subunit">
    <text evidence="1">Monomer.</text>
</comment>
<comment type="subcellular location">
    <subcellularLocation>
        <location evidence="1">Cytoplasm</location>
    </subcellularLocation>
</comment>
<comment type="similarity">
    <text evidence="1">Belongs to the class-I aminoacyl-tRNA synthetase family.</text>
</comment>
<protein>
    <recommendedName>
        <fullName evidence="1">Cysteine--tRNA ligase</fullName>
        <ecNumber evidence="1">6.1.1.16</ecNumber>
    </recommendedName>
    <alternativeName>
        <fullName evidence="1">Cysteinyl-tRNA synthetase</fullName>
        <shortName evidence="1">CysRS</shortName>
    </alternativeName>
</protein>
<evidence type="ECO:0000255" key="1">
    <source>
        <dbReference type="HAMAP-Rule" id="MF_00041"/>
    </source>
</evidence>
<sequence>MSLTVYNTRTRKKEPFVPVNPQSIKMYVCGPTVYNLVHIGNARPVVVFDVLFRVLKTLYPEVVYARNITDIDDKIMKAAKENGESISALTARFTEAYIEDMAALHNLPPSIAPKATAHIEPMIAMVAALVEKGHAYEADGHVLFDVQSMKNYGKLSNRALEDMLDGARVEVADYKRYAGDFVLWKPSADDEPGWASPWGRGRPGWHLECSAMIETHLGNTIDIHGGGRDLIFPHHENELAQSECAHGGEEYVRYWMHNGYVNIDGEKMSKSLGNFRTVRDLLQQYHGETIRFALLSAQYRSELDFSVSLLDQSKAGLDTLYGALKNAPATSTDAVDLSDNAGYLALLDDLNTPQVIAELHRLAKIVNKNEGQEAAIAAAQLQALGGLLGLLQQEPEAWFKATTSGSSELSAEDIEQLIVERKDAKLAKNYARADEIRKELTEKGIALEDSASGTSWKRI</sequence>
<name>SYC_SACD2</name>
<keyword id="KW-0030">Aminoacyl-tRNA synthetase</keyword>
<keyword id="KW-0067">ATP-binding</keyword>
<keyword id="KW-0963">Cytoplasm</keyword>
<keyword id="KW-0436">Ligase</keyword>
<keyword id="KW-0479">Metal-binding</keyword>
<keyword id="KW-0547">Nucleotide-binding</keyword>
<keyword id="KW-0648">Protein biosynthesis</keyword>
<keyword id="KW-1185">Reference proteome</keyword>
<keyword id="KW-0862">Zinc</keyword>
<accession>Q21JG6</accession>
<proteinExistence type="inferred from homology"/>
<dbReference type="EC" id="6.1.1.16" evidence="1"/>
<dbReference type="EMBL" id="CP000282">
    <property type="protein sequence ID" value="ABD81163.1"/>
    <property type="molecule type" value="Genomic_DNA"/>
</dbReference>
<dbReference type="RefSeq" id="WP_011468381.1">
    <property type="nucleotide sequence ID" value="NC_007912.1"/>
</dbReference>
<dbReference type="SMR" id="Q21JG6"/>
<dbReference type="STRING" id="203122.Sde_1903"/>
<dbReference type="GeneID" id="98613577"/>
<dbReference type="KEGG" id="sde:Sde_1903"/>
<dbReference type="eggNOG" id="COG0215">
    <property type="taxonomic scope" value="Bacteria"/>
</dbReference>
<dbReference type="HOGENOM" id="CLU_013528_0_1_6"/>
<dbReference type="OrthoDB" id="9815130at2"/>
<dbReference type="Proteomes" id="UP000001947">
    <property type="component" value="Chromosome"/>
</dbReference>
<dbReference type="GO" id="GO:0005829">
    <property type="term" value="C:cytosol"/>
    <property type="evidence" value="ECO:0007669"/>
    <property type="project" value="TreeGrafter"/>
</dbReference>
<dbReference type="GO" id="GO:0005524">
    <property type="term" value="F:ATP binding"/>
    <property type="evidence" value="ECO:0007669"/>
    <property type="project" value="UniProtKB-UniRule"/>
</dbReference>
<dbReference type="GO" id="GO:0004817">
    <property type="term" value="F:cysteine-tRNA ligase activity"/>
    <property type="evidence" value="ECO:0007669"/>
    <property type="project" value="UniProtKB-UniRule"/>
</dbReference>
<dbReference type="GO" id="GO:0008270">
    <property type="term" value="F:zinc ion binding"/>
    <property type="evidence" value="ECO:0007669"/>
    <property type="project" value="UniProtKB-UniRule"/>
</dbReference>
<dbReference type="GO" id="GO:0006423">
    <property type="term" value="P:cysteinyl-tRNA aminoacylation"/>
    <property type="evidence" value="ECO:0007669"/>
    <property type="project" value="UniProtKB-UniRule"/>
</dbReference>
<dbReference type="CDD" id="cd00672">
    <property type="entry name" value="CysRS_core"/>
    <property type="match status" value="1"/>
</dbReference>
<dbReference type="FunFam" id="3.40.50.620:FF:000009">
    <property type="entry name" value="Cysteine--tRNA ligase"/>
    <property type="match status" value="1"/>
</dbReference>
<dbReference type="Gene3D" id="1.20.120.1910">
    <property type="entry name" value="Cysteine-tRNA ligase, C-terminal anti-codon recognition domain"/>
    <property type="match status" value="1"/>
</dbReference>
<dbReference type="Gene3D" id="3.40.50.620">
    <property type="entry name" value="HUPs"/>
    <property type="match status" value="1"/>
</dbReference>
<dbReference type="HAMAP" id="MF_00041">
    <property type="entry name" value="Cys_tRNA_synth"/>
    <property type="match status" value="1"/>
</dbReference>
<dbReference type="InterPro" id="IPR015803">
    <property type="entry name" value="Cys-tRNA-ligase"/>
</dbReference>
<dbReference type="InterPro" id="IPR015273">
    <property type="entry name" value="Cys-tRNA-synt_Ia_DALR"/>
</dbReference>
<dbReference type="InterPro" id="IPR024909">
    <property type="entry name" value="Cys-tRNA/MSH_ligase"/>
</dbReference>
<dbReference type="InterPro" id="IPR014729">
    <property type="entry name" value="Rossmann-like_a/b/a_fold"/>
</dbReference>
<dbReference type="InterPro" id="IPR032678">
    <property type="entry name" value="tRNA-synt_1_cat_dom"/>
</dbReference>
<dbReference type="InterPro" id="IPR009080">
    <property type="entry name" value="tRNAsynth_Ia_anticodon-bd"/>
</dbReference>
<dbReference type="NCBIfam" id="TIGR00435">
    <property type="entry name" value="cysS"/>
    <property type="match status" value="1"/>
</dbReference>
<dbReference type="PANTHER" id="PTHR10890:SF3">
    <property type="entry name" value="CYSTEINE--TRNA LIGASE, CYTOPLASMIC"/>
    <property type="match status" value="1"/>
</dbReference>
<dbReference type="PANTHER" id="PTHR10890">
    <property type="entry name" value="CYSTEINYL-TRNA SYNTHETASE"/>
    <property type="match status" value="1"/>
</dbReference>
<dbReference type="Pfam" id="PF09190">
    <property type="entry name" value="DALR_2"/>
    <property type="match status" value="1"/>
</dbReference>
<dbReference type="Pfam" id="PF01406">
    <property type="entry name" value="tRNA-synt_1e"/>
    <property type="match status" value="1"/>
</dbReference>
<dbReference type="PRINTS" id="PR00983">
    <property type="entry name" value="TRNASYNTHCYS"/>
</dbReference>
<dbReference type="SMART" id="SM00840">
    <property type="entry name" value="DALR_2"/>
    <property type="match status" value="1"/>
</dbReference>
<dbReference type="SUPFAM" id="SSF47323">
    <property type="entry name" value="Anticodon-binding domain of a subclass of class I aminoacyl-tRNA synthetases"/>
    <property type="match status" value="1"/>
</dbReference>
<dbReference type="SUPFAM" id="SSF52374">
    <property type="entry name" value="Nucleotidylyl transferase"/>
    <property type="match status" value="1"/>
</dbReference>
<feature type="chain" id="PRO_0000240951" description="Cysteine--tRNA ligase">
    <location>
        <begin position="1"/>
        <end position="459"/>
    </location>
</feature>
<feature type="short sequence motif" description="'HIGH' region">
    <location>
        <begin position="31"/>
        <end position="41"/>
    </location>
</feature>
<feature type="short sequence motif" description="'KMSKS' region">
    <location>
        <begin position="267"/>
        <end position="271"/>
    </location>
</feature>
<feature type="binding site" evidence="1">
    <location>
        <position position="29"/>
    </location>
    <ligand>
        <name>Zn(2+)</name>
        <dbReference type="ChEBI" id="CHEBI:29105"/>
    </ligand>
</feature>
<feature type="binding site" evidence="1">
    <location>
        <position position="209"/>
    </location>
    <ligand>
        <name>Zn(2+)</name>
        <dbReference type="ChEBI" id="CHEBI:29105"/>
    </ligand>
</feature>
<feature type="binding site" evidence="1">
    <location>
        <position position="234"/>
    </location>
    <ligand>
        <name>Zn(2+)</name>
        <dbReference type="ChEBI" id="CHEBI:29105"/>
    </ligand>
</feature>
<feature type="binding site" evidence="1">
    <location>
        <position position="238"/>
    </location>
    <ligand>
        <name>Zn(2+)</name>
        <dbReference type="ChEBI" id="CHEBI:29105"/>
    </ligand>
</feature>
<feature type="binding site" evidence="1">
    <location>
        <position position="270"/>
    </location>
    <ligand>
        <name>ATP</name>
        <dbReference type="ChEBI" id="CHEBI:30616"/>
    </ligand>
</feature>